<accession>Q8TFJ2</accession>
<dbReference type="EC" id="1.2.1.12"/>
<dbReference type="EMBL" id="AJ439986">
    <property type="protein sequence ID" value="CAD29456.1"/>
    <property type="molecule type" value="Genomic_DNA"/>
</dbReference>
<dbReference type="SMR" id="Q8TFJ2"/>
<dbReference type="UniPathway" id="UPA00109">
    <property type="reaction ID" value="UER00184"/>
</dbReference>
<dbReference type="GO" id="GO:0005829">
    <property type="term" value="C:cytosol"/>
    <property type="evidence" value="ECO:0007669"/>
    <property type="project" value="TreeGrafter"/>
</dbReference>
<dbReference type="GO" id="GO:0004365">
    <property type="term" value="F:glyceraldehyde-3-phosphate dehydrogenase (NAD+) (phosphorylating) activity"/>
    <property type="evidence" value="ECO:0007669"/>
    <property type="project" value="UniProtKB-EC"/>
</dbReference>
<dbReference type="GO" id="GO:0051287">
    <property type="term" value="F:NAD binding"/>
    <property type="evidence" value="ECO:0007669"/>
    <property type="project" value="InterPro"/>
</dbReference>
<dbReference type="GO" id="GO:0050661">
    <property type="term" value="F:NADP binding"/>
    <property type="evidence" value="ECO:0007669"/>
    <property type="project" value="InterPro"/>
</dbReference>
<dbReference type="GO" id="GO:0006006">
    <property type="term" value="P:glucose metabolic process"/>
    <property type="evidence" value="ECO:0007669"/>
    <property type="project" value="InterPro"/>
</dbReference>
<dbReference type="GO" id="GO:0006096">
    <property type="term" value="P:glycolytic process"/>
    <property type="evidence" value="ECO:0007669"/>
    <property type="project" value="UniProtKB-UniPathway"/>
</dbReference>
<dbReference type="CDD" id="cd18126">
    <property type="entry name" value="GAPDH_I_C"/>
    <property type="match status" value="1"/>
</dbReference>
<dbReference type="CDD" id="cd05214">
    <property type="entry name" value="GAPDH_I_N"/>
    <property type="match status" value="1"/>
</dbReference>
<dbReference type="FunFam" id="3.30.360.10:FF:000001">
    <property type="entry name" value="Glyceraldehyde-3-phosphate dehydrogenase"/>
    <property type="match status" value="1"/>
</dbReference>
<dbReference type="FunFam" id="3.40.50.720:FF:000266">
    <property type="entry name" value="Glyceraldehyde-3-phosphate dehydrogenase"/>
    <property type="match status" value="1"/>
</dbReference>
<dbReference type="Gene3D" id="3.30.360.10">
    <property type="entry name" value="Dihydrodipicolinate Reductase, domain 2"/>
    <property type="match status" value="1"/>
</dbReference>
<dbReference type="Gene3D" id="3.40.50.720">
    <property type="entry name" value="NAD(P)-binding Rossmann-like Domain"/>
    <property type="match status" value="1"/>
</dbReference>
<dbReference type="InterPro" id="IPR020831">
    <property type="entry name" value="GlycerAld/Erythrose_P_DH"/>
</dbReference>
<dbReference type="InterPro" id="IPR020830">
    <property type="entry name" value="GlycerAld_3-P_DH_AS"/>
</dbReference>
<dbReference type="InterPro" id="IPR020829">
    <property type="entry name" value="GlycerAld_3-P_DH_cat"/>
</dbReference>
<dbReference type="InterPro" id="IPR020828">
    <property type="entry name" value="GlycerAld_3-P_DH_NAD(P)-bd"/>
</dbReference>
<dbReference type="InterPro" id="IPR006424">
    <property type="entry name" value="Glyceraldehyde-3-P_DH_1"/>
</dbReference>
<dbReference type="InterPro" id="IPR036291">
    <property type="entry name" value="NAD(P)-bd_dom_sf"/>
</dbReference>
<dbReference type="NCBIfam" id="TIGR01534">
    <property type="entry name" value="GAPDH-I"/>
    <property type="match status" value="1"/>
</dbReference>
<dbReference type="PANTHER" id="PTHR10836">
    <property type="entry name" value="GLYCERALDEHYDE 3-PHOSPHATE DEHYDROGENASE"/>
    <property type="match status" value="1"/>
</dbReference>
<dbReference type="PANTHER" id="PTHR10836:SF76">
    <property type="entry name" value="GLYCERALDEHYDE-3-PHOSPHATE DEHYDROGENASE-RELATED"/>
    <property type="match status" value="1"/>
</dbReference>
<dbReference type="Pfam" id="PF02800">
    <property type="entry name" value="Gp_dh_C"/>
    <property type="match status" value="1"/>
</dbReference>
<dbReference type="Pfam" id="PF00044">
    <property type="entry name" value="Gp_dh_N"/>
    <property type="match status" value="1"/>
</dbReference>
<dbReference type="PIRSF" id="PIRSF000149">
    <property type="entry name" value="GAP_DH"/>
    <property type="match status" value="1"/>
</dbReference>
<dbReference type="PRINTS" id="PR00078">
    <property type="entry name" value="G3PDHDRGNASE"/>
</dbReference>
<dbReference type="SMART" id="SM00846">
    <property type="entry name" value="Gp_dh_N"/>
    <property type="match status" value="1"/>
</dbReference>
<dbReference type="SUPFAM" id="SSF55347">
    <property type="entry name" value="Glyceraldehyde-3-phosphate dehydrogenase-like, C-terminal domain"/>
    <property type="match status" value="1"/>
</dbReference>
<dbReference type="SUPFAM" id="SSF51735">
    <property type="entry name" value="NAD(P)-binding Rossmann-fold domains"/>
    <property type="match status" value="1"/>
</dbReference>
<dbReference type="PROSITE" id="PS00071">
    <property type="entry name" value="GAPDH"/>
    <property type="match status" value="1"/>
</dbReference>
<proteinExistence type="inferred from homology"/>
<name>G3P_OMPOL</name>
<comment type="catalytic activity">
    <reaction evidence="2">
        <text>D-glyceraldehyde 3-phosphate + phosphate + NAD(+) = (2R)-3-phospho-glyceroyl phosphate + NADH + H(+)</text>
        <dbReference type="Rhea" id="RHEA:10300"/>
        <dbReference type="ChEBI" id="CHEBI:15378"/>
        <dbReference type="ChEBI" id="CHEBI:43474"/>
        <dbReference type="ChEBI" id="CHEBI:57540"/>
        <dbReference type="ChEBI" id="CHEBI:57604"/>
        <dbReference type="ChEBI" id="CHEBI:57945"/>
        <dbReference type="ChEBI" id="CHEBI:59776"/>
        <dbReference type="EC" id="1.2.1.12"/>
    </reaction>
</comment>
<comment type="pathway">
    <text>Carbohydrate degradation; glycolysis; pyruvate from D-glyceraldehyde 3-phosphate: step 1/5.</text>
</comment>
<comment type="subunit">
    <text evidence="1">Homotetramer.</text>
</comment>
<comment type="subcellular location">
    <subcellularLocation>
        <location evidence="1">Cytoplasm</location>
    </subcellularLocation>
</comment>
<comment type="similarity">
    <text evidence="3">Belongs to the glyceraldehyde-3-phosphate dehydrogenase family.</text>
</comment>
<protein>
    <recommendedName>
        <fullName>Glyceraldehyde-3-phosphate dehydrogenase</fullName>
        <shortName>GAPDH</shortName>
        <ecNumber>1.2.1.12</ecNumber>
    </recommendedName>
</protein>
<organism>
    <name type="scientific">Omphalotus olearius</name>
    <name type="common">Jack o'lantern</name>
    <dbReference type="NCBI Taxonomy" id="72120"/>
    <lineage>
        <taxon>Eukaryota</taxon>
        <taxon>Fungi</taxon>
        <taxon>Dikarya</taxon>
        <taxon>Basidiomycota</taxon>
        <taxon>Agaricomycotina</taxon>
        <taxon>Agaricomycetes</taxon>
        <taxon>Agaricomycetidae</taxon>
        <taxon>Agaricales</taxon>
        <taxon>Marasmiineae</taxon>
        <taxon>Omphalotaceae</taxon>
        <taxon>Omphalotus</taxon>
    </lineage>
</organism>
<evidence type="ECO:0000250" key="1"/>
<evidence type="ECO:0000255" key="2">
    <source>
        <dbReference type="PROSITE-ProRule" id="PRU10009"/>
    </source>
</evidence>
<evidence type="ECO:0000305" key="3"/>
<gene>
    <name type="primary">GPD</name>
</gene>
<reference key="1">
    <citation type="submission" date="2002-03" db="EMBL/GenBank/DDBJ databases">
        <title>Cloning and characterisation of the gpd gene from the basidiomycete Omphalotus olearius.</title>
        <authorList>
            <person name="Welzel K."/>
            <person name="Voss T."/>
            <person name="Jogler C."/>
            <person name="Anke H."/>
        </authorList>
    </citation>
    <scope>NUCLEOTIDE SEQUENCE [GENOMIC DNA]</scope>
    <source>
        <strain>TA90170</strain>
    </source>
</reference>
<sequence>MVVKVGINGFGRIGRLVIRNALEAQGVEVVAVNDPFIPLDYMVYMFKFDSVHGRYKGTVEAKDGKLIIAGKPIAVFGERDPASIPWGASGADYVVESTGVFTTIDKASAHLKGGAKKVIISAPSADAPMYVCGVNLDAYDPRRPSISNASCTTNCLAPLAKVIHDKFGIVEGLMSTIHATTATQKTVDGPSNKDWRGGRSVNNNIIPSSTGAAKAVGKVIPSLNGKLTGLSFRVPTLDVSVVDLVVRLEKEATYDEIKAAVKEAVAGPLKGILDYTEDALVSTDFTGNTHSSIFDASAGIALNKNFVKLIAWYDNEWGYSRRVVDLITFVAQKDGNA</sequence>
<keyword id="KW-0963">Cytoplasm</keyword>
<keyword id="KW-0324">Glycolysis</keyword>
<keyword id="KW-0520">NAD</keyword>
<keyword id="KW-0560">Oxidoreductase</keyword>
<feature type="chain" id="PRO_0000145564" description="Glyceraldehyde-3-phosphate dehydrogenase">
    <location>
        <begin position="1"/>
        <end position="337"/>
    </location>
</feature>
<feature type="active site" description="Nucleophile" evidence="2">
    <location>
        <position position="151"/>
    </location>
</feature>
<feature type="binding site" evidence="1">
    <location>
        <begin position="12"/>
        <end position="13"/>
    </location>
    <ligand>
        <name>NAD(+)</name>
        <dbReference type="ChEBI" id="CHEBI:57540"/>
    </ligand>
</feature>
<feature type="binding site" evidence="1">
    <location>
        <position position="34"/>
    </location>
    <ligand>
        <name>NAD(+)</name>
        <dbReference type="ChEBI" id="CHEBI:57540"/>
    </ligand>
</feature>
<feature type="binding site" evidence="1">
    <location>
        <position position="79"/>
    </location>
    <ligand>
        <name>NAD(+)</name>
        <dbReference type="ChEBI" id="CHEBI:57540"/>
    </ligand>
</feature>
<feature type="binding site" evidence="1">
    <location>
        <begin position="150"/>
        <end position="152"/>
    </location>
    <ligand>
        <name>D-glyceraldehyde 3-phosphate</name>
        <dbReference type="ChEBI" id="CHEBI:59776"/>
    </ligand>
</feature>
<feature type="binding site" evidence="1">
    <location>
        <position position="181"/>
    </location>
    <ligand>
        <name>D-glyceraldehyde 3-phosphate</name>
        <dbReference type="ChEBI" id="CHEBI:59776"/>
    </ligand>
</feature>
<feature type="binding site" evidence="1">
    <location>
        <begin position="210"/>
        <end position="211"/>
    </location>
    <ligand>
        <name>D-glyceraldehyde 3-phosphate</name>
        <dbReference type="ChEBI" id="CHEBI:59776"/>
    </ligand>
</feature>
<feature type="binding site" evidence="1">
    <location>
        <position position="233"/>
    </location>
    <ligand>
        <name>D-glyceraldehyde 3-phosphate</name>
        <dbReference type="ChEBI" id="CHEBI:59776"/>
    </ligand>
</feature>
<feature type="binding site" evidence="1">
    <location>
        <position position="315"/>
    </location>
    <ligand>
        <name>NAD(+)</name>
        <dbReference type="ChEBI" id="CHEBI:57540"/>
    </ligand>
</feature>
<feature type="site" description="Activates thiol group during catalysis" evidence="1">
    <location>
        <position position="178"/>
    </location>
</feature>